<feature type="chain" id="PRO_1000012651" description="ATP-dependent protease subunit HslV">
    <location>
        <begin position="1"/>
        <end position="176"/>
    </location>
</feature>
<feature type="active site" evidence="1">
    <location>
        <position position="2"/>
    </location>
</feature>
<feature type="binding site" evidence="1">
    <location>
        <position position="157"/>
    </location>
    <ligand>
        <name>Na(+)</name>
        <dbReference type="ChEBI" id="CHEBI:29101"/>
    </ligand>
</feature>
<feature type="binding site" evidence="1">
    <location>
        <position position="160"/>
    </location>
    <ligand>
        <name>Na(+)</name>
        <dbReference type="ChEBI" id="CHEBI:29101"/>
    </ligand>
</feature>
<feature type="binding site" evidence="1">
    <location>
        <position position="163"/>
    </location>
    <ligand>
        <name>Na(+)</name>
        <dbReference type="ChEBI" id="CHEBI:29101"/>
    </ligand>
</feature>
<reference key="1">
    <citation type="submission" date="2007-04" db="EMBL/GenBank/DDBJ databases">
        <title>Complete sequence of Pseudomonas mendocina ymp.</title>
        <authorList>
            <consortium name="US DOE Joint Genome Institute"/>
            <person name="Copeland A."/>
            <person name="Lucas S."/>
            <person name="Lapidus A."/>
            <person name="Barry K."/>
            <person name="Glavina del Rio T."/>
            <person name="Dalin E."/>
            <person name="Tice H."/>
            <person name="Pitluck S."/>
            <person name="Kiss H."/>
            <person name="Brettin T."/>
            <person name="Detter J.C."/>
            <person name="Bruce D."/>
            <person name="Han C."/>
            <person name="Schmutz J."/>
            <person name="Larimer F."/>
            <person name="Land M."/>
            <person name="Hauser L."/>
            <person name="Kyrpides N."/>
            <person name="Mikhailova N."/>
            <person name="Hersman L."/>
            <person name="Dubois J."/>
            <person name="Maurice P."/>
            <person name="Richardson P."/>
        </authorList>
    </citation>
    <scope>NUCLEOTIDE SEQUENCE [LARGE SCALE GENOMIC DNA]</scope>
    <source>
        <strain>ymp</strain>
    </source>
</reference>
<accession>A4XPN7</accession>
<comment type="function">
    <text evidence="1">Protease subunit of a proteasome-like degradation complex believed to be a general protein degrading machinery.</text>
</comment>
<comment type="catalytic activity">
    <reaction evidence="1">
        <text>ATP-dependent cleavage of peptide bonds with broad specificity.</text>
        <dbReference type="EC" id="3.4.25.2"/>
    </reaction>
</comment>
<comment type="activity regulation">
    <text evidence="1">Allosterically activated by HslU binding.</text>
</comment>
<comment type="subunit">
    <text evidence="1">A double ring-shaped homohexamer of HslV is capped on each side by a ring-shaped HslU homohexamer. The assembly of the HslU/HslV complex is dependent on binding of ATP.</text>
</comment>
<comment type="subcellular location">
    <subcellularLocation>
        <location evidence="1">Cytoplasm</location>
    </subcellularLocation>
</comment>
<comment type="similarity">
    <text evidence="1">Belongs to the peptidase T1B family. HslV subfamily.</text>
</comment>
<dbReference type="EC" id="3.4.25.2" evidence="1"/>
<dbReference type="EMBL" id="CP000680">
    <property type="protein sequence ID" value="ABP83303.1"/>
    <property type="molecule type" value="Genomic_DNA"/>
</dbReference>
<dbReference type="SMR" id="A4XPN7"/>
<dbReference type="STRING" id="399739.Pmen_0533"/>
<dbReference type="MEROPS" id="T01.007"/>
<dbReference type="KEGG" id="pmy:Pmen_0533"/>
<dbReference type="eggNOG" id="COG5405">
    <property type="taxonomic scope" value="Bacteria"/>
</dbReference>
<dbReference type="HOGENOM" id="CLU_093872_1_0_6"/>
<dbReference type="OrthoDB" id="9804884at2"/>
<dbReference type="GO" id="GO:0009376">
    <property type="term" value="C:HslUV protease complex"/>
    <property type="evidence" value="ECO:0007669"/>
    <property type="project" value="UniProtKB-UniRule"/>
</dbReference>
<dbReference type="GO" id="GO:0005839">
    <property type="term" value="C:proteasome core complex"/>
    <property type="evidence" value="ECO:0007669"/>
    <property type="project" value="InterPro"/>
</dbReference>
<dbReference type="GO" id="GO:0046872">
    <property type="term" value="F:metal ion binding"/>
    <property type="evidence" value="ECO:0007669"/>
    <property type="project" value="UniProtKB-KW"/>
</dbReference>
<dbReference type="GO" id="GO:0004298">
    <property type="term" value="F:threonine-type endopeptidase activity"/>
    <property type="evidence" value="ECO:0007669"/>
    <property type="project" value="UniProtKB-KW"/>
</dbReference>
<dbReference type="GO" id="GO:0051603">
    <property type="term" value="P:proteolysis involved in protein catabolic process"/>
    <property type="evidence" value="ECO:0007669"/>
    <property type="project" value="InterPro"/>
</dbReference>
<dbReference type="CDD" id="cd01913">
    <property type="entry name" value="protease_HslV"/>
    <property type="match status" value="1"/>
</dbReference>
<dbReference type="FunFam" id="3.60.20.10:FF:000002">
    <property type="entry name" value="ATP-dependent protease subunit HslV"/>
    <property type="match status" value="1"/>
</dbReference>
<dbReference type="Gene3D" id="3.60.20.10">
    <property type="entry name" value="Glutamine Phosphoribosylpyrophosphate, subunit 1, domain 1"/>
    <property type="match status" value="1"/>
</dbReference>
<dbReference type="HAMAP" id="MF_00248">
    <property type="entry name" value="HslV"/>
    <property type="match status" value="1"/>
</dbReference>
<dbReference type="InterPro" id="IPR022281">
    <property type="entry name" value="ATP-dep_Prtase_HsIV_su"/>
</dbReference>
<dbReference type="InterPro" id="IPR029055">
    <property type="entry name" value="Ntn_hydrolases_N"/>
</dbReference>
<dbReference type="InterPro" id="IPR001353">
    <property type="entry name" value="Proteasome_sua/b"/>
</dbReference>
<dbReference type="InterPro" id="IPR023333">
    <property type="entry name" value="Proteasome_suB-type"/>
</dbReference>
<dbReference type="NCBIfam" id="TIGR03692">
    <property type="entry name" value="ATP_dep_HslV"/>
    <property type="match status" value="1"/>
</dbReference>
<dbReference type="NCBIfam" id="NF003964">
    <property type="entry name" value="PRK05456.1"/>
    <property type="match status" value="1"/>
</dbReference>
<dbReference type="PANTHER" id="PTHR32194:SF0">
    <property type="entry name" value="ATP-DEPENDENT PROTEASE SUBUNIT HSLV"/>
    <property type="match status" value="1"/>
</dbReference>
<dbReference type="PANTHER" id="PTHR32194">
    <property type="entry name" value="METALLOPROTEASE TLDD"/>
    <property type="match status" value="1"/>
</dbReference>
<dbReference type="Pfam" id="PF00227">
    <property type="entry name" value="Proteasome"/>
    <property type="match status" value="1"/>
</dbReference>
<dbReference type="PIRSF" id="PIRSF039093">
    <property type="entry name" value="HslV"/>
    <property type="match status" value="1"/>
</dbReference>
<dbReference type="SUPFAM" id="SSF56235">
    <property type="entry name" value="N-terminal nucleophile aminohydrolases (Ntn hydrolases)"/>
    <property type="match status" value="1"/>
</dbReference>
<dbReference type="PROSITE" id="PS51476">
    <property type="entry name" value="PROTEASOME_BETA_2"/>
    <property type="match status" value="1"/>
</dbReference>
<name>HSLV_ECTM1</name>
<gene>
    <name evidence="1" type="primary">hslV</name>
    <name type="ordered locus">Pmen_0533</name>
</gene>
<protein>
    <recommendedName>
        <fullName evidence="1">ATP-dependent protease subunit HslV</fullName>
        <ecNumber evidence="1">3.4.25.2</ecNumber>
    </recommendedName>
</protein>
<evidence type="ECO:0000255" key="1">
    <source>
        <dbReference type="HAMAP-Rule" id="MF_00248"/>
    </source>
</evidence>
<sequence>MTTIVSVRRHGKVVMAGDGQVSLGNTVMKGNAKKVRRLYHGQVLAGFAGATADAFTLFERFEGQLEKHQGHLVRAAVELAKDWRTDRSLSRLEAMLAVANKDASLIITGNGDVVEPEEGLIAMGSGGNFAQAAARALLMKTDLSALEVAQTALGIAGDICVFTNHHQTIEELDAAE</sequence>
<proteinExistence type="inferred from homology"/>
<keyword id="KW-0021">Allosteric enzyme</keyword>
<keyword id="KW-0963">Cytoplasm</keyword>
<keyword id="KW-0378">Hydrolase</keyword>
<keyword id="KW-0479">Metal-binding</keyword>
<keyword id="KW-0645">Protease</keyword>
<keyword id="KW-0915">Sodium</keyword>
<keyword id="KW-0888">Threonine protease</keyword>
<organism>
    <name type="scientific">Ectopseudomonas mendocina (strain ymp)</name>
    <name type="common">Pseudomonas mendocina</name>
    <dbReference type="NCBI Taxonomy" id="399739"/>
    <lineage>
        <taxon>Bacteria</taxon>
        <taxon>Pseudomonadati</taxon>
        <taxon>Pseudomonadota</taxon>
        <taxon>Gammaproteobacteria</taxon>
        <taxon>Pseudomonadales</taxon>
        <taxon>Pseudomonadaceae</taxon>
        <taxon>Ectopseudomonas</taxon>
    </lineage>
</organism>